<comment type="catalytic activity">
    <reaction evidence="1">
        <text>tRNA(Arg) + L-arginine + ATP = L-arginyl-tRNA(Arg) + AMP + diphosphate</text>
        <dbReference type="Rhea" id="RHEA:20301"/>
        <dbReference type="Rhea" id="RHEA-COMP:9658"/>
        <dbReference type="Rhea" id="RHEA-COMP:9673"/>
        <dbReference type="ChEBI" id="CHEBI:30616"/>
        <dbReference type="ChEBI" id="CHEBI:32682"/>
        <dbReference type="ChEBI" id="CHEBI:33019"/>
        <dbReference type="ChEBI" id="CHEBI:78442"/>
        <dbReference type="ChEBI" id="CHEBI:78513"/>
        <dbReference type="ChEBI" id="CHEBI:456215"/>
        <dbReference type="EC" id="6.1.1.19"/>
    </reaction>
</comment>
<comment type="subunit">
    <text evidence="1">Monomer.</text>
</comment>
<comment type="subcellular location">
    <subcellularLocation>
        <location evidence="1">Cytoplasm</location>
    </subcellularLocation>
</comment>
<comment type="similarity">
    <text evidence="1">Belongs to the class-I aminoacyl-tRNA synthetase family.</text>
</comment>
<sequence length="553" mass="62365">MNIIDQVKQTLVEEIAASINKAGLADEIPDIKIEVPKDTKNGDYATNIAMVLTKIAKRNPREIAQAIVDNLDTEKAHVKQIDIAGPGFINFYLDNQYLTAIIPEAIEKGDQFGHVNESKGQNVLLEYVSANPTGDLHIGHARNAAVGDALANILTAAGYNVTREYYINDAGNQITNLARSIETRFFEALGDNSYSMPEDGYNGKDIIEIGKDLAEKHPEIKDYSEEARLKEFRKLGVEYEMAKLKNDLAEFNTHFDNWFSETSLYEKGEILEVLAKMKELGYTYEADGATWLRTTDFKDDKDRVLIKNDGTYTYFLPDIAYHFDKVKRGNDILIDLFGADHHGYINRLKASLETFGVDSNRLEIQIMQMVRLMENGKEVKMSKRTGNAITLREIMDEVGVDAARYFLTMRSPDSHFDFDMELAKEQSQDNPVYYAQYAHARICSILKQAKEQGIEVTAANDFTTITNEKAIELLKKVADFEPTIESAAEHRSAHRITNYIQDLAAHFHKFYNAEKVLTDDIEKTKAHVAMIEAVRITLKNALAMVGVSAPESM</sequence>
<keyword id="KW-0030">Aminoacyl-tRNA synthetase</keyword>
<keyword id="KW-0067">ATP-binding</keyword>
<keyword id="KW-0963">Cytoplasm</keyword>
<keyword id="KW-0436">Ligase</keyword>
<keyword id="KW-0547">Nucleotide-binding</keyword>
<keyword id="KW-0648">Protein biosynthesis</keyword>
<reference key="1">
    <citation type="submission" date="2007-05" db="EMBL/GenBank/DDBJ databases">
        <title>Complete sequence of chromosome of Staphylococcus aureus subsp. aureus JH9.</title>
        <authorList>
            <consortium name="US DOE Joint Genome Institute"/>
            <person name="Copeland A."/>
            <person name="Lucas S."/>
            <person name="Lapidus A."/>
            <person name="Barry K."/>
            <person name="Detter J.C."/>
            <person name="Glavina del Rio T."/>
            <person name="Hammon N."/>
            <person name="Israni S."/>
            <person name="Pitluck S."/>
            <person name="Chain P."/>
            <person name="Malfatti S."/>
            <person name="Shin M."/>
            <person name="Vergez L."/>
            <person name="Schmutz J."/>
            <person name="Larimer F."/>
            <person name="Land M."/>
            <person name="Hauser L."/>
            <person name="Kyrpides N."/>
            <person name="Kim E."/>
            <person name="Tomasz A."/>
            <person name="Richardson P."/>
        </authorList>
    </citation>
    <scope>NUCLEOTIDE SEQUENCE [LARGE SCALE GENOMIC DNA]</scope>
    <source>
        <strain>JH9</strain>
    </source>
</reference>
<accession>A5IQG1</accession>
<organism>
    <name type="scientific">Staphylococcus aureus (strain JH9)</name>
    <dbReference type="NCBI Taxonomy" id="359786"/>
    <lineage>
        <taxon>Bacteria</taxon>
        <taxon>Bacillati</taxon>
        <taxon>Bacillota</taxon>
        <taxon>Bacilli</taxon>
        <taxon>Bacillales</taxon>
        <taxon>Staphylococcaceae</taxon>
        <taxon>Staphylococcus</taxon>
    </lineage>
</organism>
<dbReference type="EC" id="6.1.1.19" evidence="1"/>
<dbReference type="EMBL" id="CP000703">
    <property type="protein sequence ID" value="ABQ48434.1"/>
    <property type="molecule type" value="Genomic_DNA"/>
</dbReference>
<dbReference type="RefSeq" id="WP_001021144.1">
    <property type="nucleotide sequence ID" value="NC_009487.1"/>
</dbReference>
<dbReference type="SMR" id="A5IQG1"/>
<dbReference type="KEGG" id="saj:SaurJH9_0630"/>
<dbReference type="HOGENOM" id="CLU_006406_0_1_9"/>
<dbReference type="GO" id="GO:0005737">
    <property type="term" value="C:cytoplasm"/>
    <property type="evidence" value="ECO:0007669"/>
    <property type="project" value="UniProtKB-SubCell"/>
</dbReference>
<dbReference type="GO" id="GO:0004814">
    <property type="term" value="F:arginine-tRNA ligase activity"/>
    <property type="evidence" value="ECO:0007669"/>
    <property type="project" value="UniProtKB-UniRule"/>
</dbReference>
<dbReference type="GO" id="GO:0005524">
    <property type="term" value="F:ATP binding"/>
    <property type="evidence" value="ECO:0007669"/>
    <property type="project" value="UniProtKB-UniRule"/>
</dbReference>
<dbReference type="GO" id="GO:0006420">
    <property type="term" value="P:arginyl-tRNA aminoacylation"/>
    <property type="evidence" value="ECO:0007669"/>
    <property type="project" value="UniProtKB-UniRule"/>
</dbReference>
<dbReference type="CDD" id="cd00671">
    <property type="entry name" value="ArgRS_core"/>
    <property type="match status" value="1"/>
</dbReference>
<dbReference type="FunFam" id="1.10.730.10:FF:000008">
    <property type="entry name" value="Arginine--tRNA ligase"/>
    <property type="match status" value="1"/>
</dbReference>
<dbReference type="FunFam" id="3.30.1360.70:FF:000003">
    <property type="entry name" value="Arginine--tRNA ligase"/>
    <property type="match status" value="1"/>
</dbReference>
<dbReference type="FunFam" id="3.40.50.620:FF:000062">
    <property type="entry name" value="Arginine--tRNA ligase"/>
    <property type="match status" value="1"/>
</dbReference>
<dbReference type="Gene3D" id="3.30.1360.70">
    <property type="entry name" value="Arginyl tRNA synthetase N-terminal domain"/>
    <property type="match status" value="1"/>
</dbReference>
<dbReference type="Gene3D" id="3.40.50.620">
    <property type="entry name" value="HUPs"/>
    <property type="match status" value="1"/>
</dbReference>
<dbReference type="Gene3D" id="1.10.730.10">
    <property type="entry name" value="Isoleucyl-tRNA Synthetase, Domain 1"/>
    <property type="match status" value="1"/>
</dbReference>
<dbReference type="HAMAP" id="MF_00123">
    <property type="entry name" value="Arg_tRNA_synth"/>
    <property type="match status" value="1"/>
</dbReference>
<dbReference type="InterPro" id="IPR001412">
    <property type="entry name" value="aa-tRNA-synth_I_CS"/>
</dbReference>
<dbReference type="InterPro" id="IPR001278">
    <property type="entry name" value="Arg-tRNA-ligase"/>
</dbReference>
<dbReference type="InterPro" id="IPR005148">
    <property type="entry name" value="Arg-tRNA-synth_N"/>
</dbReference>
<dbReference type="InterPro" id="IPR036695">
    <property type="entry name" value="Arg-tRNA-synth_N_sf"/>
</dbReference>
<dbReference type="InterPro" id="IPR035684">
    <property type="entry name" value="ArgRS_core"/>
</dbReference>
<dbReference type="InterPro" id="IPR008909">
    <property type="entry name" value="DALR_anticod-bd"/>
</dbReference>
<dbReference type="InterPro" id="IPR014729">
    <property type="entry name" value="Rossmann-like_a/b/a_fold"/>
</dbReference>
<dbReference type="InterPro" id="IPR009080">
    <property type="entry name" value="tRNAsynth_Ia_anticodon-bd"/>
</dbReference>
<dbReference type="NCBIfam" id="TIGR00456">
    <property type="entry name" value="argS"/>
    <property type="match status" value="1"/>
</dbReference>
<dbReference type="PANTHER" id="PTHR11956:SF5">
    <property type="entry name" value="ARGININE--TRNA LIGASE, CYTOPLASMIC"/>
    <property type="match status" value="1"/>
</dbReference>
<dbReference type="PANTHER" id="PTHR11956">
    <property type="entry name" value="ARGINYL-TRNA SYNTHETASE"/>
    <property type="match status" value="1"/>
</dbReference>
<dbReference type="Pfam" id="PF03485">
    <property type="entry name" value="Arg_tRNA_synt_N"/>
    <property type="match status" value="1"/>
</dbReference>
<dbReference type="Pfam" id="PF05746">
    <property type="entry name" value="DALR_1"/>
    <property type="match status" value="1"/>
</dbReference>
<dbReference type="Pfam" id="PF00750">
    <property type="entry name" value="tRNA-synt_1d"/>
    <property type="match status" value="1"/>
</dbReference>
<dbReference type="PRINTS" id="PR01038">
    <property type="entry name" value="TRNASYNTHARG"/>
</dbReference>
<dbReference type="SMART" id="SM01016">
    <property type="entry name" value="Arg_tRNA_synt_N"/>
    <property type="match status" value="1"/>
</dbReference>
<dbReference type="SMART" id="SM00836">
    <property type="entry name" value="DALR_1"/>
    <property type="match status" value="1"/>
</dbReference>
<dbReference type="SUPFAM" id="SSF47323">
    <property type="entry name" value="Anticodon-binding domain of a subclass of class I aminoacyl-tRNA synthetases"/>
    <property type="match status" value="1"/>
</dbReference>
<dbReference type="SUPFAM" id="SSF55190">
    <property type="entry name" value="Arginyl-tRNA synthetase (ArgRS), N-terminal 'additional' domain"/>
    <property type="match status" value="1"/>
</dbReference>
<dbReference type="SUPFAM" id="SSF52374">
    <property type="entry name" value="Nucleotidylyl transferase"/>
    <property type="match status" value="1"/>
</dbReference>
<dbReference type="PROSITE" id="PS00178">
    <property type="entry name" value="AA_TRNA_LIGASE_I"/>
    <property type="match status" value="1"/>
</dbReference>
<gene>
    <name evidence="1" type="primary">argS</name>
    <name type="ordered locus">SaurJH9_0630</name>
</gene>
<feature type="chain" id="PRO_1000076234" description="Arginine--tRNA ligase">
    <location>
        <begin position="1"/>
        <end position="553"/>
    </location>
</feature>
<feature type="short sequence motif" description="'HIGH' region">
    <location>
        <begin position="130"/>
        <end position="140"/>
    </location>
</feature>
<name>SYR_STAA9</name>
<evidence type="ECO:0000255" key="1">
    <source>
        <dbReference type="HAMAP-Rule" id="MF_00123"/>
    </source>
</evidence>
<protein>
    <recommendedName>
        <fullName evidence="1">Arginine--tRNA ligase</fullName>
        <ecNumber evidence="1">6.1.1.19</ecNumber>
    </recommendedName>
    <alternativeName>
        <fullName evidence="1">Arginyl-tRNA synthetase</fullName>
        <shortName evidence="1">ArgRS</shortName>
    </alternativeName>
</protein>
<proteinExistence type="inferred from homology"/>